<gene>
    <name type="primary">ATG7</name>
    <name type="synonym">GSA7</name>
    <name type="synonym">PAZ12</name>
</gene>
<sequence length="654" mass="74293">MTSMDIPYSQISSFVNSSFFQKVSQLKLNKYRLDDTDKAIVGSVDFKFIGKNQPTSLSVDESSFNDNITYTHAQFPVKGILKNLNTVEDFRKVDKNEFLQSQGLVVHKSIQDRSCLKDLSKLTQFFILSFSDLKGFKFIYWFGFPSLVSRWKVNKLSGLTESQIEPYESKLNEWLNARLPIEQKQAFIIDNLEFKPFEQLSSFSPDDQLNIGFIDTSSILNKCSTQLRNILYMLAYYGFENIKVYNFRFNNTTSFTLDITLAEPLTSEPKTTGWERTAQGKLGPKLADIGALVDPARLADQSVDLNLKLMKWRVMPELDLDIIKNSKVLLLGAGTLGSYVSRVLLGYGVRHITFVDNGKVSFSNPVRQPLFNFTDCLEGGAPKAETAAKALKLIFPLITSQGYNLEVPMAGHPVTDEKRQYEDYQRLVTLIKEHDVVFLLMDSRETRWLPTVLCNVFDKICITAALGFDSYLVMRHGNLFNTEHIEAEENSHRLGCYFCNDIIAPKDSTTDRTLDQMCTVTRPGVALLASSLAAELFVSILQHPLKSHAPASLHDNATVLGCLPQQLRGFLHNFETSKLEANNYEYCSACSIQVLNEYKSRTWDFVKDALNENNYLEDLTGLTKVKQESEIAEKKFQEFENGLEFSDEDSEWIN</sequence>
<dbReference type="EMBL" id="AF098976">
    <property type="protein sequence ID" value="AAD14610.1"/>
    <property type="molecule type" value="Genomic_DNA"/>
</dbReference>
<dbReference type="SMR" id="O93922"/>
<dbReference type="GO" id="GO:0000407">
    <property type="term" value="C:phagophore assembly site"/>
    <property type="evidence" value="ECO:0007669"/>
    <property type="project" value="UniProtKB-SubCell"/>
</dbReference>
<dbReference type="GO" id="GO:0019778">
    <property type="term" value="F:Atg12 activating enzyme activity"/>
    <property type="evidence" value="ECO:0007669"/>
    <property type="project" value="TreeGrafter"/>
</dbReference>
<dbReference type="GO" id="GO:0019779">
    <property type="term" value="F:Atg8 activating enzyme activity"/>
    <property type="evidence" value="ECO:0007669"/>
    <property type="project" value="TreeGrafter"/>
</dbReference>
<dbReference type="GO" id="GO:0000045">
    <property type="term" value="P:autophagosome assembly"/>
    <property type="evidence" value="ECO:0007669"/>
    <property type="project" value="TreeGrafter"/>
</dbReference>
<dbReference type="GO" id="GO:0000422">
    <property type="term" value="P:autophagy of mitochondrion"/>
    <property type="evidence" value="ECO:0007669"/>
    <property type="project" value="TreeGrafter"/>
</dbReference>
<dbReference type="GO" id="GO:0006995">
    <property type="term" value="P:cellular response to nitrogen starvation"/>
    <property type="evidence" value="ECO:0007669"/>
    <property type="project" value="TreeGrafter"/>
</dbReference>
<dbReference type="GO" id="GO:0000426">
    <property type="term" value="P:micropexophagy"/>
    <property type="evidence" value="ECO:0000315"/>
    <property type="project" value="UniProtKB"/>
</dbReference>
<dbReference type="GO" id="GO:0000425">
    <property type="term" value="P:pexophagy"/>
    <property type="evidence" value="ECO:0000315"/>
    <property type="project" value="UniProtKB"/>
</dbReference>
<dbReference type="GO" id="GO:0034727">
    <property type="term" value="P:piecemeal microautophagy of the nucleus"/>
    <property type="evidence" value="ECO:0007669"/>
    <property type="project" value="TreeGrafter"/>
</dbReference>
<dbReference type="GO" id="GO:0032446">
    <property type="term" value="P:protein modification by small protein conjugation"/>
    <property type="evidence" value="ECO:0007669"/>
    <property type="project" value="TreeGrafter"/>
</dbReference>
<dbReference type="GO" id="GO:0015031">
    <property type="term" value="P:protein transport"/>
    <property type="evidence" value="ECO:0007669"/>
    <property type="project" value="UniProtKB-KW"/>
</dbReference>
<dbReference type="CDD" id="cd01486">
    <property type="entry name" value="Apg7"/>
    <property type="match status" value="1"/>
</dbReference>
<dbReference type="FunFam" id="3.40.50.720:FF:000243">
    <property type="entry name" value="Ubiquitin-like modifier-activating enzyme ATG7"/>
    <property type="match status" value="1"/>
</dbReference>
<dbReference type="Gene3D" id="3.40.50.720">
    <property type="entry name" value="NAD(P)-binding Rossmann-like Domain"/>
    <property type="match status" value="1"/>
</dbReference>
<dbReference type="Gene3D" id="3.40.140.100">
    <property type="entry name" value="Ubiquitin-like modifier-activating enzyme ATG7 C-terminal domain"/>
    <property type="match status" value="1"/>
</dbReference>
<dbReference type="Gene3D" id="3.40.140.70">
    <property type="entry name" value="Ubiquitin-like modifier-activating enzyme ATG7 N-terminal domain"/>
    <property type="match status" value="1"/>
</dbReference>
<dbReference type="InterPro" id="IPR006285">
    <property type="entry name" value="Atg7"/>
</dbReference>
<dbReference type="InterPro" id="IPR032197">
    <property type="entry name" value="Atg7_N"/>
</dbReference>
<dbReference type="InterPro" id="IPR042522">
    <property type="entry name" value="Atg7_N_1"/>
</dbReference>
<dbReference type="InterPro" id="IPR042523">
    <property type="entry name" value="Atg7_N_2"/>
</dbReference>
<dbReference type="InterPro" id="IPR045886">
    <property type="entry name" value="ThiF/MoeB/HesA"/>
</dbReference>
<dbReference type="InterPro" id="IPR000594">
    <property type="entry name" value="ThiF_NAD_FAD-bd"/>
</dbReference>
<dbReference type="InterPro" id="IPR035985">
    <property type="entry name" value="Ubiquitin-activating_enz"/>
</dbReference>
<dbReference type="NCBIfam" id="TIGR01381">
    <property type="entry name" value="E1_like_apg7"/>
    <property type="match status" value="1"/>
</dbReference>
<dbReference type="PANTHER" id="PTHR10953">
    <property type="entry name" value="UBIQUITIN-ACTIVATING ENZYME E1"/>
    <property type="match status" value="1"/>
</dbReference>
<dbReference type="PANTHER" id="PTHR10953:SF3">
    <property type="entry name" value="UBIQUITIN-LIKE MODIFIER-ACTIVATING ENZYME ATG7"/>
    <property type="match status" value="1"/>
</dbReference>
<dbReference type="Pfam" id="PF16420">
    <property type="entry name" value="ATG7_N"/>
    <property type="match status" value="1"/>
</dbReference>
<dbReference type="Pfam" id="PF00899">
    <property type="entry name" value="ThiF"/>
    <property type="match status" value="1"/>
</dbReference>
<dbReference type="SUPFAM" id="SSF69572">
    <property type="entry name" value="Activating enzymes of the ubiquitin-like proteins"/>
    <property type="match status" value="1"/>
</dbReference>
<evidence type="ECO:0000250" key="1"/>
<evidence type="ECO:0000269" key="2">
    <source>
    </source>
</evidence>
<evidence type="ECO:0000269" key="3">
    <source>
    </source>
</evidence>
<evidence type="ECO:0000305" key="4"/>
<name>ATG7_PICPA</name>
<proteinExistence type="evidence at protein level"/>
<organism>
    <name type="scientific">Komagataella pastoris</name>
    <name type="common">Yeast</name>
    <name type="synonym">Pichia pastoris</name>
    <dbReference type="NCBI Taxonomy" id="4922"/>
    <lineage>
        <taxon>Eukaryota</taxon>
        <taxon>Fungi</taxon>
        <taxon>Dikarya</taxon>
        <taxon>Ascomycota</taxon>
        <taxon>Saccharomycotina</taxon>
        <taxon>Pichiomycetes</taxon>
        <taxon>Pichiales</taxon>
        <taxon>Pichiaceae</taxon>
        <taxon>Komagataella</taxon>
    </lineage>
</organism>
<reference key="1">
    <citation type="journal article" date="1999" name="Mol. Biol. Cell">
        <title>Glucose-induced autophagy of peroxisomes in Pichia pastoris requires a unique E1-like protein.</title>
        <authorList>
            <person name="Yuan W."/>
            <person name="Stromhaug P.E."/>
            <person name="Dunn W.A. Jr."/>
        </authorList>
    </citation>
    <scope>NUCLEOTIDE SEQUENCE [GENOMIC DNA]</scope>
    <scope>FUNCTION</scope>
    <scope>MUTAGENESIS OF CYS-518 AND CYS-562</scope>
</reference>
<reference key="2">
    <citation type="journal article" date="2002" name="Genes Cells">
        <title>Paz2 and 13 other PAZ gene products regulate vacuolar engulfment of peroxisomes during micropexophagy.</title>
        <authorList>
            <person name="Mukaiyama H."/>
            <person name="Oku M."/>
            <person name="Baba M."/>
            <person name="Samizo T."/>
            <person name="Hammond A.T."/>
            <person name="Glick B.S."/>
            <person name="Kato N."/>
            <person name="Sakai Y."/>
        </authorList>
    </citation>
    <scope>FUNCTION</scope>
</reference>
<reference key="3">
    <citation type="journal article" date="2003" name="Dev. Cell">
        <title>A unified nomenclature for yeast autophagy-related genes.</title>
        <authorList>
            <person name="Klionsky D.J."/>
            <person name="Cregg J.M."/>
            <person name="Dunn W.A. Jr."/>
            <person name="Emr S.D."/>
            <person name="Sakai Y."/>
            <person name="Sandoval I.V."/>
            <person name="Sibirny A."/>
            <person name="Subramani S."/>
            <person name="Thumm M."/>
            <person name="Veenhuis M."/>
            <person name="Ohsumi Y."/>
        </authorList>
    </citation>
    <scope>NOMENCLATURE</scope>
</reference>
<accession>O93922</accession>
<comment type="function">
    <text evidence="1 2 3">E1-like activating enzyme involved in the 2 ubiquitin-like systems required for cytoplasm to vacuole transport (Cvt) and autophagy. Activates ATG12 for its conjugation with ATG5 and ATG8 for its conjugation with phosphatidylethanolamine. Both systems are needed for the ATG8 association to Cvt vesicles and autophagosomes membranes. Autophagy is essential for maintenance of amino acid levels and protein synthesis under nitrogen starvation. Required for selective autophagic degradation of the nucleus (nucleophagy) as well as for mitophagy which contributes to regulate mitochondrial quantity and quality by eliminating the mitochondria to a basal level to fulfill cellular energy requirements and preventing excess ROS production. Plays a role in the regulation of filamentous growth and chronological longevity (By similarity). Involved in glucose-induced micropexophagy.</text>
</comment>
<comment type="subunit">
    <text evidence="1">Homodimer. Interacts with ATG8 through a thioester bond between Cys-518 and the C-terminal 'Gly-116' of ATG8 (By similarity).</text>
</comment>
<comment type="subcellular location">
    <subcellularLocation>
        <location evidence="1">Cytoplasm</location>
    </subcellularLocation>
    <subcellularLocation>
        <location evidence="1">Preautophagosomal structure</location>
    </subcellularLocation>
</comment>
<comment type="domain">
    <text evidence="1">The C-terminal 40 residues are required for homodimerization.</text>
</comment>
<comment type="domain">
    <text evidence="1">The GxGxxG motif is important for the function, possibly through binding with ATP.</text>
</comment>
<comment type="similarity">
    <text evidence="4">Belongs to the ATG7 family.</text>
</comment>
<feature type="chain" id="PRO_0000212819" description="Ubiquitin-like modifier-activating enzyme ATG7">
    <location>
        <begin position="1"/>
        <end position="654"/>
    </location>
</feature>
<feature type="region of interest" description="Homodimerization">
    <location>
        <begin position="615"/>
        <end position="654"/>
    </location>
</feature>
<feature type="short sequence motif" description="GXGXXG motif">
    <location>
        <begin position="332"/>
        <end position="337"/>
    </location>
</feature>
<feature type="active site" description="Glycyl thioester intermediate" evidence="4">
    <location>
        <position position="518"/>
    </location>
</feature>
<feature type="mutagenesis site" description="No more micropexophagy." evidence="2">
    <original>C</original>
    <variation>S</variation>
    <location>
        <position position="518"/>
    </location>
</feature>
<feature type="mutagenesis site" description="Normal micropexophagy." evidence="2">
    <original>C</original>
    <variation>S</variation>
    <location>
        <position position="562"/>
    </location>
</feature>
<keyword id="KW-0072">Autophagy</keyword>
<keyword id="KW-0963">Cytoplasm</keyword>
<keyword id="KW-0653">Protein transport</keyword>
<keyword id="KW-0813">Transport</keyword>
<keyword id="KW-0833">Ubl conjugation pathway</keyword>
<protein>
    <recommendedName>
        <fullName>Ubiquitin-like modifier-activating enzyme ATG7</fullName>
    </recommendedName>
    <alternativeName>
        <fullName>ATG12-activating enzyme E1 ATG7</fullName>
    </alternativeName>
    <alternativeName>
        <fullName>Autophagy-related protein 7</fullName>
    </alternativeName>
    <alternativeName>
        <fullName>Glucose-induced selective autophagy protein 7</fullName>
    </alternativeName>
    <alternativeName>
        <fullName>Pexophagy zeocin-resistant mutant protein 12</fullName>
    </alternativeName>
</protein>